<protein>
    <recommendedName>
        <fullName evidence="1">4-diphosphocytidyl-2-C-methyl-D-erythritol kinase</fullName>
        <shortName evidence="1">CMK</shortName>
        <ecNumber evidence="1">2.7.1.148</ecNumber>
    </recommendedName>
    <alternativeName>
        <fullName evidence="1">4-(cytidine-5'-diphospho)-2-C-methyl-D-erythritol kinase</fullName>
    </alternativeName>
</protein>
<sequence length="301" mass="31428">MQAGGIPGFALTFAAPAKINLALHVVGQRADGHHLLESLVTFAECGDRVGLIAADRDRFTVSGRFATDLSAEGNGGNLVLRARDLLRRELAAQGRMAGPVHLHLEKNLPIASGIGGGSADAAATLRGLLSLWGATVEAASLNSLALQLGADVPMCLDRGPLVARGIGEEITPLPDLPPFDVVLVNPLVAVSTPVIFRSLVRKTNPPLVLPEDARSTAEWLTAMAAMRNDLEPPARAHEPMIETVSNALRDAGAALVRMSGSGATCFGLFTGMKSAERAAETISAGHPRWYVQATRTAGKSG</sequence>
<reference key="1">
    <citation type="journal article" date="2001" name="Proc. Natl. Acad. Sci. U.S.A.">
        <title>Analysis of the chromosome sequence of the legume symbiont Sinorhizobium meliloti strain 1021.</title>
        <authorList>
            <person name="Capela D."/>
            <person name="Barloy-Hubler F."/>
            <person name="Gouzy J."/>
            <person name="Bothe G."/>
            <person name="Ampe F."/>
            <person name="Batut J."/>
            <person name="Boistard P."/>
            <person name="Becker A."/>
            <person name="Boutry M."/>
            <person name="Cadieu E."/>
            <person name="Dreano S."/>
            <person name="Gloux S."/>
            <person name="Godrie T."/>
            <person name="Goffeau A."/>
            <person name="Kahn D."/>
            <person name="Kiss E."/>
            <person name="Lelaure V."/>
            <person name="Masuy D."/>
            <person name="Pohl T."/>
            <person name="Portetelle D."/>
            <person name="Puehler A."/>
            <person name="Purnelle B."/>
            <person name="Ramsperger U."/>
            <person name="Renard C."/>
            <person name="Thebault P."/>
            <person name="Vandenbol M."/>
            <person name="Weidner S."/>
            <person name="Galibert F."/>
        </authorList>
    </citation>
    <scope>NUCLEOTIDE SEQUENCE [LARGE SCALE GENOMIC DNA]</scope>
    <source>
        <strain>1021</strain>
    </source>
</reference>
<reference key="2">
    <citation type="journal article" date="2001" name="Science">
        <title>The composite genome of the legume symbiont Sinorhizobium meliloti.</title>
        <authorList>
            <person name="Galibert F."/>
            <person name="Finan T.M."/>
            <person name="Long S.R."/>
            <person name="Puehler A."/>
            <person name="Abola P."/>
            <person name="Ampe F."/>
            <person name="Barloy-Hubler F."/>
            <person name="Barnett M.J."/>
            <person name="Becker A."/>
            <person name="Boistard P."/>
            <person name="Bothe G."/>
            <person name="Boutry M."/>
            <person name="Bowser L."/>
            <person name="Buhrmester J."/>
            <person name="Cadieu E."/>
            <person name="Capela D."/>
            <person name="Chain P."/>
            <person name="Cowie A."/>
            <person name="Davis R.W."/>
            <person name="Dreano S."/>
            <person name="Federspiel N.A."/>
            <person name="Fisher R.F."/>
            <person name="Gloux S."/>
            <person name="Godrie T."/>
            <person name="Goffeau A."/>
            <person name="Golding B."/>
            <person name="Gouzy J."/>
            <person name="Gurjal M."/>
            <person name="Hernandez-Lucas I."/>
            <person name="Hong A."/>
            <person name="Huizar L."/>
            <person name="Hyman R.W."/>
            <person name="Jones T."/>
            <person name="Kahn D."/>
            <person name="Kahn M.L."/>
            <person name="Kalman S."/>
            <person name="Keating D.H."/>
            <person name="Kiss E."/>
            <person name="Komp C."/>
            <person name="Lelaure V."/>
            <person name="Masuy D."/>
            <person name="Palm C."/>
            <person name="Peck M.C."/>
            <person name="Pohl T.M."/>
            <person name="Portetelle D."/>
            <person name="Purnelle B."/>
            <person name="Ramsperger U."/>
            <person name="Surzycki R."/>
            <person name="Thebault P."/>
            <person name="Vandenbol M."/>
            <person name="Vorhoelter F.J."/>
            <person name="Weidner S."/>
            <person name="Wells D.H."/>
            <person name="Wong K."/>
            <person name="Yeh K.-C."/>
            <person name="Batut J."/>
        </authorList>
    </citation>
    <scope>NUCLEOTIDE SEQUENCE [LARGE SCALE GENOMIC DNA]</scope>
    <source>
        <strain>1021</strain>
    </source>
</reference>
<name>ISPE_RHIME</name>
<dbReference type="EC" id="2.7.1.148" evidence="1"/>
<dbReference type="EMBL" id="AL591688">
    <property type="protein sequence ID" value="CAC45416.1"/>
    <property type="molecule type" value="Genomic_DNA"/>
</dbReference>
<dbReference type="RefSeq" id="NP_384950.1">
    <property type="nucleotide sequence ID" value="NC_003047.1"/>
</dbReference>
<dbReference type="RefSeq" id="WP_010968859.1">
    <property type="nucleotide sequence ID" value="NC_003047.1"/>
</dbReference>
<dbReference type="SMR" id="Q92RM1"/>
<dbReference type="EnsemblBacteria" id="CAC45416">
    <property type="protein sequence ID" value="CAC45416"/>
    <property type="gene ID" value="SMc00862"/>
</dbReference>
<dbReference type="KEGG" id="sme:SMc00862"/>
<dbReference type="PATRIC" id="fig|266834.11.peg.2236"/>
<dbReference type="eggNOG" id="COG1947">
    <property type="taxonomic scope" value="Bacteria"/>
</dbReference>
<dbReference type="HOGENOM" id="CLU_053057_1_0_5"/>
<dbReference type="OrthoDB" id="9809438at2"/>
<dbReference type="UniPathway" id="UPA00056">
    <property type="reaction ID" value="UER00094"/>
</dbReference>
<dbReference type="Proteomes" id="UP000001976">
    <property type="component" value="Chromosome"/>
</dbReference>
<dbReference type="GO" id="GO:0050515">
    <property type="term" value="F:4-(cytidine 5'-diphospho)-2-C-methyl-D-erythritol kinase activity"/>
    <property type="evidence" value="ECO:0007669"/>
    <property type="project" value="UniProtKB-UniRule"/>
</dbReference>
<dbReference type="GO" id="GO:0005524">
    <property type="term" value="F:ATP binding"/>
    <property type="evidence" value="ECO:0007669"/>
    <property type="project" value="UniProtKB-UniRule"/>
</dbReference>
<dbReference type="GO" id="GO:0019288">
    <property type="term" value="P:isopentenyl diphosphate biosynthetic process, methylerythritol 4-phosphate pathway"/>
    <property type="evidence" value="ECO:0007669"/>
    <property type="project" value="UniProtKB-UniRule"/>
</dbReference>
<dbReference type="GO" id="GO:0016114">
    <property type="term" value="P:terpenoid biosynthetic process"/>
    <property type="evidence" value="ECO:0007669"/>
    <property type="project" value="InterPro"/>
</dbReference>
<dbReference type="Gene3D" id="3.30.230.10">
    <property type="match status" value="1"/>
</dbReference>
<dbReference type="Gene3D" id="3.30.70.890">
    <property type="entry name" value="GHMP kinase, C-terminal domain"/>
    <property type="match status" value="1"/>
</dbReference>
<dbReference type="HAMAP" id="MF_00061">
    <property type="entry name" value="IspE"/>
    <property type="match status" value="1"/>
</dbReference>
<dbReference type="InterPro" id="IPR013750">
    <property type="entry name" value="GHMP_kinase_C_dom"/>
</dbReference>
<dbReference type="InterPro" id="IPR036554">
    <property type="entry name" value="GHMP_kinase_C_sf"/>
</dbReference>
<dbReference type="InterPro" id="IPR006204">
    <property type="entry name" value="GHMP_kinase_N_dom"/>
</dbReference>
<dbReference type="InterPro" id="IPR004424">
    <property type="entry name" value="IspE"/>
</dbReference>
<dbReference type="InterPro" id="IPR020568">
    <property type="entry name" value="Ribosomal_Su5_D2-typ_SF"/>
</dbReference>
<dbReference type="InterPro" id="IPR014721">
    <property type="entry name" value="Ribsml_uS5_D2-typ_fold_subgr"/>
</dbReference>
<dbReference type="NCBIfam" id="TIGR00154">
    <property type="entry name" value="ispE"/>
    <property type="match status" value="1"/>
</dbReference>
<dbReference type="NCBIfam" id="NF011202">
    <property type="entry name" value="PRK14608.1"/>
    <property type="match status" value="1"/>
</dbReference>
<dbReference type="PANTHER" id="PTHR43527">
    <property type="entry name" value="4-DIPHOSPHOCYTIDYL-2-C-METHYL-D-ERYTHRITOL KINASE, CHLOROPLASTIC"/>
    <property type="match status" value="1"/>
</dbReference>
<dbReference type="PANTHER" id="PTHR43527:SF2">
    <property type="entry name" value="4-DIPHOSPHOCYTIDYL-2-C-METHYL-D-ERYTHRITOL KINASE, CHLOROPLASTIC"/>
    <property type="match status" value="1"/>
</dbReference>
<dbReference type="Pfam" id="PF08544">
    <property type="entry name" value="GHMP_kinases_C"/>
    <property type="match status" value="1"/>
</dbReference>
<dbReference type="Pfam" id="PF00288">
    <property type="entry name" value="GHMP_kinases_N"/>
    <property type="match status" value="1"/>
</dbReference>
<dbReference type="PIRSF" id="PIRSF010376">
    <property type="entry name" value="IspE"/>
    <property type="match status" value="1"/>
</dbReference>
<dbReference type="SUPFAM" id="SSF55060">
    <property type="entry name" value="GHMP Kinase, C-terminal domain"/>
    <property type="match status" value="1"/>
</dbReference>
<dbReference type="SUPFAM" id="SSF54211">
    <property type="entry name" value="Ribosomal protein S5 domain 2-like"/>
    <property type="match status" value="1"/>
</dbReference>
<keyword id="KW-0067">ATP-binding</keyword>
<keyword id="KW-0414">Isoprene biosynthesis</keyword>
<keyword id="KW-0418">Kinase</keyword>
<keyword id="KW-0547">Nucleotide-binding</keyword>
<keyword id="KW-1185">Reference proteome</keyword>
<keyword id="KW-0808">Transferase</keyword>
<comment type="function">
    <text evidence="1">Catalyzes the phosphorylation of the position 2 hydroxy group of 4-diphosphocytidyl-2C-methyl-D-erythritol.</text>
</comment>
<comment type="catalytic activity">
    <reaction evidence="1">
        <text>4-CDP-2-C-methyl-D-erythritol + ATP = 4-CDP-2-C-methyl-D-erythritol 2-phosphate + ADP + H(+)</text>
        <dbReference type="Rhea" id="RHEA:18437"/>
        <dbReference type="ChEBI" id="CHEBI:15378"/>
        <dbReference type="ChEBI" id="CHEBI:30616"/>
        <dbReference type="ChEBI" id="CHEBI:57823"/>
        <dbReference type="ChEBI" id="CHEBI:57919"/>
        <dbReference type="ChEBI" id="CHEBI:456216"/>
        <dbReference type="EC" id="2.7.1.148"/>
    </reaction>
</comment>
<comment type="pathway">
    <text evidence="1">Isoprenoid biosynthesis; isopentenyl diphosphate biosynthesis via DXP pathway; isopentenyl diphosphate from 1-deoxy-D-xylulose 5-phosphate: step 3/6.</text>
</comment>
<comment type="similarity">
    <text evidence="1">Belongs to the GHMP kinase family. IspE subfamily.</text>
</comment>
<feature type="chain" id="PRO_0000189254" description="4-diphosphocytidyl-2-C-methyl-D-erythritol kinase">
    <location>
        <begin position="1"/>
        <end position="301"/>
    </location>
</feature>
<feature type="active site" evidence="1">
    <location>
        <position position="18"/>
    </location>
</feature>
<feature type="active site" evidence="1">
    <location>
        <position position="151"/>
    </location>
</feature>
<feature type="binding site" evidence="1">
    <location>
        <begin position="109"/>
        <end position="119"/>
    </location>
    <ligand>
        <name>ATP</name>
        <dbReference type="ChEBI" id="CHEBI:30616"/>
    </ligand>
</feature>
<evidence type="ECO:0000255" key="1">
    <source>
        <dbReference type="HAMAP-Rule" id="MF_00061"/>
    </source>
</evidence>
<proteinExistence type="inferred from homology"/>
<gene>
    <name evidence="1" type="primary">ispE</name>
    <name type="synonym">ipk</name>
    <name type="ordered locus">R00844</name>
    <name type="ORF">SMc00862</name>
</gene>
<accession>Q92RM1</accession>
<organism>
    <name type="scientific">Rhizobium meliloti (strain 1021)</name>
    <name type="common">Ensifer meliloti</name>
    <name type="synonym">Sinorhizobium meliloti</name>
    <dbReference type="NCBI Taxonomy" id="266834"/>
    <lineage>
        <taxon>Bacteria</taxon>
        <taxon>Pseudomonadati</taxon>
        <taxon>Pseudomonadota</taxon>
        <taxon>Alphaproteobacteria</taxon>
        <taxon>Hyphomicrobiales</taxon>
        <taxon>Rhizobiaceae</taxon>
        <taxon>Sinorhizobium/Ensifer group</taxon>
        <taxon>Sinorhizobium</taxon>
    </lineage>
</organism>